<keyword id="KW-0963">Cytoplasm</keyword>
<keyword id="KW-0227">DNA damage</keyword>
<keyword id="KW-0234">DNA repair</keyword>
<keyword id="KW-0255">Endonuclease</keyword>
<keyword id="KW-0378">Hydrolase</keyword>
<keyword id="KW-0540">Nuclease</keyword>
<name>MUTH_VIBVU</name>
<organism>
    <name type="scientific">Vibrio vulnificus (strain CMCP6)</name>
    <dbReference type="NCBI Taxonomy" id="216895"/>
    <lineage>
        <taxon>Bacteria</taxon>
        <taxon>Pseudomonadati</taxon>
        <taxon>Pseudomonadota</taxon>
        <taxon>Gammaproteobacteria</taxon>
        <taxon>Vibrionales</taxon>
        <taxon>Vibrionaceae</taxon>
        <taxon>Vibrio</taxon>
    </lineage>
</organism>
<proteinExistence type="inferred from homology"/>
<comment type="function">
    <text evidence="1">Sequence-specific endonuclease that cleaves unmethylated GATC sequences. It is involved in DNA mismatch repair.</text>
</comment>
<comment type="subcellular location">
    <subcellularLocation>
        <location evidence="1">Cytoplasm</location>
    </subcellularLocation>
</comment>
<comment type="similarity">
    <text evidence="1">Belongs to the MutH family.</text>
</comment>
<sequence>MKPIPQTEAELLQRANQIAGCSFAELAEEANMDVPLDLKRDKGWVGQLLEWHLGAPAGSKPQQDFSELGIELKSIPVSYSGKPLETTFVCVAPLTGVHGLTWETSHVRNKLSRVLWIPVEGEREIPLAERHVGTPLLWSPNDEEEILLKNDWEELMEMIVFGQFDQISARHGVALHLRPKAANSKALTEAYNINGKPIKTLPRGFYLRTQFTAQILQNAFNSLLNEE</sequence>
<protein>
    <recommendedName>
        <fullName evidence="1">DNA mismatch repair protein MutH</fullName>
    </recommendedName>
    <alternativeName>
        <fullName evidence="1">Methyl-directed mismatch repair protein</fullName>
    </alternativeName>
</protein>
<evidence type="ECO:0000255" key="1">
    <source>
        <dbReference type="HAMAP-Rule" id="MF_00759"/>
    </source>
</evidence>
<gene>
    <name evidence="1" type="primary">mutH</name>
    <name type="ordered locus">VV1_0521</name>
</gene>
<dbReference type="EMBL" id="AE016795">
    <property type="protein sequence ID" value="AAO09039.1"/>
    <property type="molecule type" value="Genomic_DNA"/>
</dbReference>
<dbReference type="RefSeq" id="WP_011078609.1">
    <property type="nucleotide sequence ID" value="NC_004459.3"/>
</dbReference>
<dbReference type="SMR" id="Q8DER4"/>
<dbReference type="KEGG" id="vvu:VV1_0521"/>
<dbReference type="HOGENOM" id="CLU_086669_0_0_6"/>
<dbReference type="Proteomes" id="UP000002275">
    <property type="component" value="Chromosome 1"/>
</dbReference>
<dbReference type="GO" id="GO:0005737">
    <property type="term" value="C:cytoplasm"/>
    <property type="evidence" value="ECO:0007669"/>
    <property type="project" value="UniProtKB-SubCell"/>
</dbReference>
<dbReference type="GO" id="GO:0003677">
    <property type="term" value="F:DNA binding"/>
    <property type="evidence" value="ECO:0007669"/>
    <property type="project" value="InterPro"/>
</dbReference>
<dbReference type="GO" id="GO:0004519">
    <property type="term" value="F:endonuclease activity"/>
    <property type="evidence" value="ECO:0007669"/>
    <property type="project" value="UniProtKB-UniRule"/>
</dbReference>
<dbReference type="GO" id="GO:0006304">
    <property type="term" value="P:DNA modification"/>
    <property type="evidence" value="ECO:0007669"/>
    <property type="project" value="InterPro"/>
</dbReference>
<dbReference type="GO" id="GO:0006298">
    <property type="term" value="P:mismatch repair"/>
    <property type="evidence" value="ECO:0007669"/>
    <property type="project" value="UniProtKB-UniRule"/>
</dbReference>
<dbReference type="CDD" id="cd00583">
    <property type="entry name" value="MutH-like"/>
    <property type="match status" value="1"/>
</dbReference>
<dbReference type="Gene3D" id="3.40.600.10">
    <property type="entry name" value="DNA mismatch repair MutH/Restriction endonuclease, type II"/>
    <property type="match status" value="1"/>
</dbReference>
<dbReference type="HAMAP" id="MF_00759">
    <property type="entry name" value="MutH"/>
    <property type="match status" value="1"/>
</dbReference>
<dbReference type="InterPro" id="IPR004230">
    <property type="entry name" value="DNA_mismatch_repair_MutH"/>
</dbReference>
<dbReference type="InterPro" id="IPR011337">
    <property type="entry name" value="DNA_rep_MutH/RE_typeII_Sau3AI"/>
</dbReference>
<dbReference type="InterPro" id="IPR037057">
    <property type="entry name" value="DNA_rep_MutH/T2_RE_sf"/>
</dbReference>
<dbReference type="InterPro" id="IPR011335">
    <property type="entry name" value="Restrct_endonuc-II-like"/>
</dbReference>
<dbReference type="NCBIfam" id="TIGR02248">
    <property type="entry name" value="mutH_TIGR"/>
    <property type="match status" value="1"/>
</dbReference>
<dbReference type="NCBIfam" id="NF003458">
    <property type="entry name" value="PRK05070.1"/>
    <property type="match status" value="1"/>
</dbReference>
<dbReference type="Pfam" id="PF02976">
    <property type="entry name" value="MutH"/>
    <property type="match status" value="1"/>
</dbReference>
<dbReference type="SMART" id="SM00927">
    <property type="entry name" value="MutH"/>
    <property type="match status" value="1"/>
</dbReference>
<dbReference type="SUPFAM" id="SSF52980">
    <property type="entry name" value="Restriction endonuclease-like"/>
    <property type="match status" value="1"/>
</dbReference>
<feature type="chain" id="PRO_0000198678" description="DNA mismatch repair protein MutH">
    <location>
        <begin position="1"/>
        <end position="227"/>
    </location>
</feature>
<reference key="1">
    <citation type="submission" date="2002-12" db="EMBL/GenBank/DDBJ databases">
        <title>Complete genome sequence of Vibrio vulnificus CMCP6.</title>
        <authorList>
            <person name="Rhee J.H."/>
            <person name="Kim S.Y."/>
            <person name="Chung S.S."/>
            <person name="Kim J.J."/>
            <person name="Moon Y.H."/>
            <person name="Jeong H."/>
            <person name="Choy H.E."/>
        </authorList>
    </citation>
    <scope>NUCLEOTIDE SEQUENCE [LARGE SCALE GENOMIC DNA]</scope>
    <source>
        <strain>CMCP6</strain>
    </source>
</reference>
<accession>Q8DER4</accession>